<accession>Q99UX1</accession>
<proteinExistence type="inferred from homology"/>
<protein>
    <recommendedName>
        <fullName>High-affinity heme uptake system protein IsdE</fullName>
    </recommendedName>
    <alternativeName>
        <fullName>Iron-regulated surface determinant protein E</fullName>
    </alternativeName>
    <alternativeName>
        <fullName>Staphylococcal iron-regulated protein F</fullName>
    </alternativeName>
</protein>
<feature type="signal peptide" evidence="2">
    <location>
        <begin position="1"/>
        <end position="19"/>
    </location>
</feature>
<feature type="chain" id="PRO_0000326212" description="High-affinity heme uptake system protein IsdE">
    <location>
        <begin position="20"/>
        <end position="292"/>
    </location>
</feature>
<feature type="domain" description="Fe/B12 periplasmic-binding" evidence="3">
    <location>
        <begin position="35"/>
        <end position="291"/>
    </location>
</feature>
<feature type="binding site" evidence="1">
    <location>
        <position position="41"/>
    </location>
    <ligand>
        <name>heme</name>
        <dbReference type="ChEBI" id="CHEBI:30413"/>
    </ligand>
</feature>
<feature type="binding site" evidence="1">
    <location>
        <position position="42"/>
    </location>
    <ligand>
        <name>heme</name>
        <dbReference type="ChEBI" id="CHEBI:30413"/>
    </ligand>
</feature>
<feature type="binding site" evidence="1">
    <location>
        <position position="60"/>
    </location>
    <ligand>
        <name>heme</name>
        <dbReference type="ChEBI" id="CHEBI:30413"/>
    </ligand>
</feature>
<feature type="binding site" evidence="1">
    <location>
        <position position="61"/>
    </location>
    <ligand>
        <name>heme</name>
        <dbReference type="ChEBI" id="CHEBI:30413"/>
    </ligand>
</feature>
<feature type="binding site" description="axial binding residue" evidence="1">
    <location>
        <position position="78"/>
    </location>
    <ligand>
        <name>heme</name>
        <dbReference type="ChEBI" id="CHEBI:30413"/>
    </ligand>
    <ligandPart>
        <name>Fe</name>
        <dbReference type="ChEBI" id="CHEBI:18248"/>
    </ligandPart>
</feature>
<feature type="binding site" description="axial binding residue" evidence="1">
    <location>
        <position position="229"/>
    </location>
    <ligand>
        <name>heme</name>
        <dbReference type="ChEBI" id="CHEBI:30413"/>
    </ligand>
    <ligandPart>
        <name>Fe</name>
        <dbReference type="ChEBI" id="CHEBI:18248"/>
    </ligandPart>
</feature>
<feature type="lipid moiety-binding region" description="N-palmitoyl cysteine" evidence="2">
    <location>
        <position position="20"/>
    </location>
</feature>
<feature type="lipid moiety-binding region" description="S-diacylglycerol cysteine" evidence="2">
    <location>
        <position position="20"/>
    </location>
</feature>
<organism>
    <name type="scientific">Staphylococcus aureus (strain Mu50 / ATCC 700699)</name>
    <dbReference type="NCBI Taxonomy" id="158878"/>
    <lineage>
        <taxon>Bacteria</taxon>
        <taxon>Bacillati</taxon>
        <taxon>Bacillota</taxon>
        <taxon>Bacilli</taxon>
        <taxon>Bacillales</taxon>
        <taxon>Staphylococcaceae</taxon>
        <taxon>Staphylococcus</taxon>
    </lineage>
</organism>
<gene>
    <name type="primary">isdE</name>
    <name type="synonym">sirF</name>
    <name type="ordered locus">SAV1133</name>
</gene>
<reference key="1">
    <citation type="journal article" date="2001" name="Lancet">
        <title>Whole genome sequencing of meticillin-resistant Staphylococcus aureus.</title>
        <authorList>
            <person name="Kuroda M."/>
            <person name="Ohta T."/>
            <person name="Uchiyama I."/>
            <person name="Baba T."/>
            <person name="Yuzawa H."/>
            <person name="Kobayashi I."/>
            <person name="Cui L."/>
            <person name="Oguchi A."/>
            <person name="Aoki K."/>
            <person name="Nagai Y."/>
            <person name="Lian J.-Q."/>
            <person name="Ito T."/>
            <person name="Kanamori M."/>
            <person name="Matsumaru H."/>
            <person name="Maruyama A."/>
            <person name="Murakami H."/>
            <person name="Hosoyama A."/>
            <person name="Mizutani-Ui Y."/>
            <person name="Takahashi N.K."/>
            <person name="Sawano T."/>
            <person name="Inoue R."/>
            <person name="Kaito C."/>
            <person name="Sekimizu K."/>
            <person name="Hirakawa H."/>
            <person name="Kuhara S."/>
            <person name="Goto S."/>
            <person name="Yabuzaki J."/>
            <person name="Kanehisa M."/>
            <person name="Yamashita A."/>
            <person name="Oshima K."/>
            <person name="Furuya K."/>
            <person name="Yoshino C."/>
            <person name="Shiba T."/>
            <person name="Hattori M."/>
            <person name="Ogasawara N."/>
            <person name="Hayashi H."/>
            <person name="Hiramatsu K."/>
        </authorList>
    </citation>
    <scope>NUCLEOTIDE SEQUENCE [LARGE SCALE GENOMIC DNA]</scope>
    <source>
        <strain>Mu50 / ATCC 700699</strain>
    </source>
</reference>
<comment type="function">
    <text evidence="1">Involved in heme (porphyrin) scavenging. Binds Fe(2+) and Fe(3+) heme but the largest fraction is Fe(2+) heme. Functions as a high-affinity heme binding protein and probably has a role in relaying heme-iron from cell wall-anchored isd proteins receptors to the probable permease IsdF (By similarity).</text>
</comment>
<comment type="cofactor">
    <cofactor evidence="1">
        <name>heme b</name>
        <dbReference type="ChEBI" id="CHEBI:60344"/>
    </cofactor>
    <text evidence="1">Binds 1 heme b (iron(II)-protoporphyrin IX) group per subunit.</text>
</comment>
<comment type="subcellular location">
    <subcellularLocation>
        <location evidence="2">Cell membrane</location>
        <topology evidence="2">Lipid-anchor</topology>
    </subcellularLocation>
</comment>
<comment type="induction">
    <text evidence="1">Repressed by fur in the presence of iron.</text>
</comment>
<comment type="similarity">
    <text evidence="4">Belongs to the bacterial solute-binding protein 8 family.</text>
</comment>
<name>ISDE_STAAM</name>
<evidence type="ECO:0000250" key="1"/>
<evidence type="ECO:0000255" key="2">
    <source>
        <dbReference type="PROSITE-ProRule" id="PRU00303"/>
    </source>
</evidence>
<evidence type="ECO:0000255" key="3">
    <source>
        <dbReference type="PROSITE-ProRule" id="PRU00344"/>
    </source>
</evidence>
<evidence type="ECO:0000305" key="4"/>
<sequence>MRIIKYLTILVISVVILTSCQSSSSQESTKSGEFRIVPTTVALTMTLDKLDLPIVGKPTSYKTLPNRYKDVPEIGQPMEPNVEAVKKLKPTHVLSVSTIKDEMQPFYKQLNMKGYFYDFDSLKGMQKSITQLGDQFNRKAQAKELNDHLNSVKQKIENKAAKQKKHPKVLILMGVPGSYLVATDKSYIGDLVKIAGGENVIKVKDRQYISSNTENLLNINPDIILRLPHGMPEEVKKMFQKEFKQNDIWKHFKAVKNNHVYDLEEVPFGITANVDADKAMTQLYDLFYKDKK</sequence>
<keyword id="KW-1003">Cell membrane</keyword>
<keyword id="KW-0349">Heme</keyword>
<keyword id="KW-0408">Iron</keyword>
<keyword id="KW-0449">Lipoprotein</keyword>
<keyword id="KW-0472">Membrane</keyword>
<keyword id="KW-0479">Metal-binding</keyword>
<keyword id="KW-0564">Palmitate</keyword>
<keyword id="KW-0732">Signal</keyword>
<keyword id="KW-0813">Transport</keyword>
<dbReference type="EMBL" id="BA000017">
    <property type="protein sequence ID" value="BAB57295.1"/>
    <property type="molecule type" value="Genomic_DNA"/>
</dbReference>
<dbReference type="RefSeq" id="WP_001220199.1">
    <property type="nucleotide sequence ID" value="NC_002758.2"/>
</dbReference>
<dbReference type="SMR" id="Q99UX1"/>
<dbReference type="KEGG" id="sav:SAV1133"/>
<dbReference type="HOGENOM" id="CLU_038034_2_3_9"/>
<dbReference type="PhylomeDB" id="Q99UX1"/>
<dbReference type="Proteomes" id="UP000002481">
    <property type="component" value="Chromosome"/>
</dbReference>
<dbReference type="GO" id="GO:0005886">
    <property type="term" value="C:plasma membrane"/>
    <property type="evidence" value="ECO:0007669"/>
    <property type="project" value="UniProtKB-SubCell"/>
</dbReference>
<dbReference type="GO" id="GO:0020037">
    <property type="term" value="F:heme binding"/>
    <property type="evidence" value="ECO:0007669"/>
    <property type="project" value="InterPro"/>
</dbReference>
<dbReference type="GO" id="GO:0046872">
    <property type="term" value="F:metal ion binding"/>
    <property type="evidence" value="ECO:0007669"/>
    <property type="project" value="UniProtKB-KW"/>
</dbReference>
<dbReference type="GO" id="GO:0071281">
    <property type="term" value="P:cellular response to iron ion"/>
    <property type="evidence" value="ECO:0007669"/>
    <property type="project" value="TreeGrafter"/>
</dbReference>
<dbReference type="GO" id="GO:0015886">
    <property type="term" value="P:heme transport"/>
    <property type="evidence" value="ECO:0007669"/>
    <property type="project" value="InterPro"/>
</dbReference>
<dbReference type="FunFam" id="3.40.50.1980:FF:000022">
    <property type="entry name" value="Heme ABC transporter substrate-binding protein IsdE"/>
    <property type="match status" value="1"/>
</dbReference>
<dbReference type="FunFam" id="3.40.50.1980:FF:000031">
    <property type="entry name" value="High-affinity heme uptake system protein IsdE"/>
    <property type="match status" value="1"/>
</dbReference>
<dbReference type="Gene3D" id="3.40.50.1980">
    <property type="entry name" value="Nitrogenase molybdenum iron protein domain"/>
    <property type="match status" value="2"/>
</dbReference>
<dbReference type="InterPro" id="IPR050902">
    <property type="entry name" value="ABC_Transporter_SBP"/>
</dbReference>
<dbReference type="InterPro" id="IPR019957">
    <property type="entry name" value="ABC_transptr_haem-bd_IsdE"/>
</dbReference>
<dbReference type="InterPro" id="IPR002491">
    <property type="entry name" value="ABC_transptr_periplasmic_BD"/>
</dbReference>
<dbReference type="NCBIfam" id="TIGR03659">
    <property type="entry name" value="IsdE"/>
    <property type="match status" value="1"/>
</dbReference>
<dbReference type="PANTHER" id="PTHR30535:SF36">
    <property type="entry name" value="HIGH-AFFINITY HEME UPTAKE SYSTEM PROTEIN ISDE"/>
    <property type="match status" value="1"/>
</dbReference>
<dbReference type="PANTHER" id="PTHR30535">
    <property type="entry name" value="VITAMIN B12-BINDING PROTEIN"/>
    <property type="match status" value="1"/>
</dbReference>
<dbReference type="Pfam" id="PF01497">
    <property type="entry name" value="Peripla_BP_2"/>
    <property type="match status" value="1"/>
</dbReference>
<dbReference type="SUPFAM" id="SSF53807">
    <property type="entry name" value="Helical backbone' metal receptor"/>
    <property type="match status" value="1"/>
</dbReference>
<dbReference type="PROSITE" id="PS50983">
    <property type="entry name" value="FE_B12_PBP"/>
    <property type="match status" value="1"/>
</dbReference>
<dbReference type="PROSITE" id="PS51257">
    <property type="entry name" value="PROKAR_LIPOPROTEIN"/>
    <property type="match status" value="1"/>
</dbReference>